<organism evidence="7">
    <name type="scientific">Glossina morsitans morsitans</name>
    <name type="common">Savannah tsetse fly</name>
    <dbReference type="NCBI Taxonomy" id="37546"/>
    <lineage>
        <taxon>Eukaryota</taxon>
        <taxon>Metazoa</taxon>
        <taxon>Ecdysozoa</taxon>
        <taxon>Arthropoda</taxon>
        <taxon>Hexapoda</taxon>
        <taxon>Insecta</taxon>
        <taxon>Pterygota</taxon>
        <taxon>Neoptera</taxon>
        <taxon>Endopterygota</taxon>
        <taxon>Diptera</taxon>
        <taxon>Brachycera</taxon>
        <taxon>Muscomorpha</taxon>
        <taxon>Hippoboscoidea</taxon>
        <taxon>Glossinidae</taxon>
        <taxon>Glossina</taxon>
    </lineage>
</organism>
<sequence>MSLLYGLLILAFTRSCLVVGQCSINIPDDLKGEEAPVILVKTGNNVKLFRPEEKTTTFPKGTELLLACTGEGNGLKSNGQETTTLSCNGNQFESAAKEKLKDMSCKSMAKAVVEQTTKRCMGNDFNLYEAGYKVNGKFYGSVYDICYNGKGQSSGYTHNFIYGRTWKYKLPEKPYEHYSSRDPQAGKDLDKLYKEQKERFKNTKVNGKPLLDDEHYFTEGQLTPDTSIITGADKLSTYDYANIAPLFKDIYDGNIWRYENMTQELADQRQATFEEYTGGFYSYEVEKWKPIGLDNAEFPTHRVPKYIYKLVVDTESKDGIVFVTLNDPYHKSPASENLCKDICSEANINEPDFKNVEKGYTICCSYGDFGNRIRTLPKDIHVKGLLKY</sequence>
<evidence type="ECO:0000255" key="1"/>
<evidence type="ECO:0000255" key="2">
    <source>
        <dbReference type="PROSITE-ProRule" id="PRU00498"/>
    </source>
</evidence>
<evidence type="ECO:0000269" key="3">
    <source>
    </source>
</evidence>
<evidence type="ECO:0000303" key="4">
    <source>
    </source>
</evidence>
<evidence type="ECO:0000305" key="5"/>
<evidence type="ECO:0000305" key="6">
    <source>
    </source>
</evidence>
<evidence type="ECO:0000312" key="7">
    <source>
        <dbReference type="EMBL" id="ABN58709.1"/>
    </source>
</evidence>
<dbReference type="EC" id="3.1.-.-" evidence="3"/>
<dbReference type="EMBL" id="EF409243">
    <property type="protein sequence ID" value="ABN58709.1"/>
    <property type="molecule type" value="mRNA"/>
</dbReference>
<dbReference type="Proteomes" id="UP000092444">
    <property type="component" value="Unplaced"/>
</dbReference>
<dbReference type="GO" id="GO:0005576">
    <property type="term" value="C:extracellular region"/>
    <property type="evidence" value="ECO:0000314"/>
    <property type="project" value="UniProtKB"/>
</dbReference>
<dbReference type="GO" id="GO:0005743">
    <property type="term" value="C:mitochondrial inner membrane"/>
    <property type="evidence" value="ECO:0007669"/>
    <property type="project" value="TreeGrafter"/>
</dbReference>
<dbReference type="GO" id="GO:0005634">
    <property type="term" value="C:nucleus"/>
    <property type="evidence" value="ECO:0007669"/>
    <property type="project" value="TreeGrafter"/>
</dbReference>
<dbReference type="GO" id="GO:0004536">
    <property type="term" value="F:DNA nuclease activity"/>
    <property type="evidence" value="ECO:0000314"/>
    <property type="project" value="UniProtKB"/>
</dbReference>
<dbReference type="GO" id="GO:0003690">
    <property type="term" value="F:double-stranded DNA binding"/>
    <property type="evidence" value="ECO:0000314"/>
    <property type="project" value="UniProtKB"/>
</dbReference>
<dbReference type="GO" id="GO:0003725">
    <property type="term" value="F:double-stranded RNA binding"/>
    <property type="evidence" value="ECO:0000314"/>
    <property type="project" value="UniProtKB"/>
</dbReference>
<dbReference type="GO" id="GO:0046872">
    <property type="term" value="F:metal ion binding"/>
    <property type="evidence" value="ECO:0007669"/>
    <property type="project" value="InterPro"/>
</dbReference>
<dbReference type="GO" id="GO:0004521">
    <property type="term" value="F:RNA endonuclease activity"/>
    <property type="evidence" value="ECO:0007669"/>
    <property type="project" value="TreeGrafter"/>
</dbReference>
<dbReference type="GO" id="GO:0003697">
    <property type="term" value="F:single-stranded DNA binding"/>
    <property type="evidence" value="ECO:0000314"/>
    <property type="project" value="UniProtKB"/>
</dbReference>
<dbReference type="GO" id="GO:0000014">
    <property type="term" value="F:single-stranded DNA endodeoxyribonuclease activity"/>
    <property type="evidence" value="ECO:0007669"/>
    <property type="project" value="TreeGrafter"/>
</dbReference>
<dbReference type="GO" id="GO:0006309">
    <property type="term" value="P:apoptotic DNA fragmentation"/>
    <property type="evidence" value="ECO:0007669"/>
    <property type="project" value="TreeGrafter"/>
</dbReference>
<dbReference type="GO" id="GO:0022600">
    <property type="term" value="P:digestive system process"/>
    <property type="evidence" value="ECO:0000315"/>
    <property type="project" value="UniProtKB"/>
</dbReference>
<dbReference type="Gene3D" id="3.40.570.10">
    <property type="entry name" value="Extracellular Endonuclease, subunit A"/>
    <property type="match status" value="1"/>
</dbReference>
<dbReference type="InterPro" id="IPR044929">
    <property type="entry name" value="DNA/RNA_non-sp_Endonuclease_sf"/>
</dbReference>
<dbReference type="InterPro" id="IPR001604">
    <property type="entry name" value="Endo_G_ENPP1-like_dom"/>
</dbReference>
<dbReference type="InterPro" id="IPR044925">
    <property type="entry name" value="His-Me_finger_sf"/>
</dbReference>
<dbReference type="InterPro" id="IPR040255">
    <property type="entry name" value="Non-specific_endonuclease"/>
</dbReference>
<dbReference type="PANTHER" id="PTHR13966">
    <property type="entry name" value="ENDONUCLEASE RELATED"/>
    <property type="match status" value="1"/>
</dbReference>
<dbReference type="PANTHER" id="PTHR13966:SF17">
    <property type="entry name" value="ENDONUCLEASE-RELATED"/>
    <property type="match status" value="1"/>
</dbReference>
<dbReference type="Pfam" id="PF01223">
    <property type="entry name" value="Endonuclease_NS"/>
    <property type="match status" value="1"/>
</dbReference>
<dbReference type="SUPFAM" id="SSF54060">
    <property type="entry name" value="His-Me finger endonucleases"/>
    <property type="match status" value="1"/>
</dbReference>
<gene>
    <name evidence="4" type="primary">Tsal2a</name>
</gene>
<proteinExistence type="evidence at protein level"/>
<protein>
    <recommendedName>
        <fullName evidence="5">Salivary protein Tsal2A</fullName>
    </recommendedName>
    <alternativeName>
        <fullName evidence="7">Tsal2 form A</fullName>
        <ecNumber evidence="3">3.1.-.-</ecNumber>
    </alternativeName>
</protein>
<comment type="function">
    <text evidence="3">Binds double-stranded DNA (dsDNA) with high affinity (PubMed:23110062). Binds double-stranded RNA (PubMed:23110062). Binds single-stranded DNA with lower affinity and with a preference for purine-rich sequences (PubMed:23110062). Shows residual nuclease activity for dsDNA (PubMed:23110062). Facilitates blood meal intake by lowering the local viscosity created by the release of host DNA (PubMed:23110062).</text>
</comment>
<comment type="cofactor">
    <cofactor evidence="3">
        <name>a divalent metal cation</name>
        <dbReference type="ChEBI" id="CHEBI:60240"/>
    </cofactor>
</comment>
<comment type="biophysicochemical properties">
    <phDependence>
        <text evidence="3">Active from pH 5.5 to 11.0.</text>
    </phDependence>
</comment>
<comment type="subcellular location">
    <subcellularLocation>
        <location evidence="6">Secreted</location>
    </subcellularLocation>
</comment>
<comment type="tissue specificity">
    <text evidence="3">Saliva (at protein level).</text>
</comment>
<comment type="disruption phenotype">
    <text evidence="3">RNAi-mediated knockdown results in impaired blood digestion observed as an increase in nucleic acids, hematin and protein contents in the intestinal tract after blood meal.</text>
</comment>
<comment type="similarity">
    <text evidence="5">Belongs to the DNA/RNA non-specific endonuclease family.</text>
</comment>
<name>SAL2A_GLOMM</name>
<reference evidence="7" key="1">
    <citation type="journal article" date="2007" name="Insect Biochem. Mol. Biol.">
        <title>The Glossina morsitans tsetse fly saliva: general characteristics and identification of novel salivary proteins.</title>
        <authorList>
            <person name="Van Den Abbeele J."/>
            <person name="Caljon G."/>
            <person name="Dierick J.-F."/>
            <person name="Moens L."/>
            <person name="De Ridder K."/>
            <person name="Coosemans M."/>
        </authorList>
    </citation>
    <scope>NUCLEOTIDE SEQUENCE [MRNA]</scope>
    <source>
        <tissue evidence="7">Salivary gland</tissue>
    </source>
</reference>
<reference evidence="5" key="2">
    <citation type="journal article" date="2012" name="PLoS ONE">
        <title>Tsetse salivary gland proteins 1 and 2 are high affinity nucleic acid binding proteins with residual nuclease activity.</title>
        <authorList>
            <person name="Caljon G."/>
            <person name="De Ridder K."/>
            <person name="Stijlemans B."/>
            <person name="Coosemans M."/>
            <person name="Magez S."/>
            <person name="De Baetselier P."/>
            <person name="Van Den Abbeele J."/>
        </authorList>
    </citation>
    <scope>FUNCTION</scope>
    <scope>CATALYTIC ACTIVITY</scope>
    <scope>COFACTOR</scope>
    <scope>BIOPHYSICOCHEMICAL PROPERTIES</scope>
    <scope>SUBCELLULAR LOCATION</scope>
    <scope>TISSUE SPECIFICITY</scope>
    <scope>DISRUPTION PHENOTYPE</scope>
</reference>
<keyword id="KW-0255">Endonuclease</keyword>
<keyword id="KW-0325">Glycoprotein</keyword>
<keyword id="KW-0378">Hydrolase</keyword>
<keyword id="KW-0540">Nuclease</keyword>
<keyword id="KW-0964">Secreted</keyword>
<keyword id="KW-0732">Signal</keyword>
<feature type="signal peptide" evidence="1">
    <location>
        <begin position="1"/>
        <end position="18"/>
    </location>
</feature>
<feature type="chain" id="PRO_5002652608" description="Salivary protein Tsal2A" evidence="1">
    <location>
        <begin position="19"/>
        <end position="388"/>
    </location>
</feature>
<feature type="glycosylation site" description="N-linked (GlcNAc...) asparagine" evidence="2">
    <location>
        <position position="260"/>
    </location>
</feature>
<accession>A3FMN3</accession>